<evidence type="ECO:0000255" key="1">
    <source>
        <dbReference type="HAMAP-Rule" id="MF_00380"/>
    </source>
</evidence>
<keyword id="KW-0233">DNA recombination</keyword>
<keyword id="KW-0238">DNA-binding</keyword>
<keyword id="KW-1185">Reference proteome</keyword>
<keyword id="KW-0804">Transcription</keyword>
<keyword id="KW-0805">Transcription regulation</keyword>
<keyword id="KW-0810">Translation regulation</keyword>
<proteinExistence type="inferred from homology"/>
<gene>
    <name evidence="1" type="primary">ihfA</name>
    <name evidence="1" type="synonym">himA</name>
    <name type="ordered locus">XOO3181</name>
</gene>
<accession>Q5GXY6</accession>
<comment type="function">
    <text evidence="1">This protein is one of the two subunits of integration host factor, a specific DNA-binding protein that functions in genetic recombination as well as in transcriptional and translational control.</text>
</comment>
<comment type="subunit">
    <text evidence="1">Heterodimer of an alpha and a beta chain.</text>
</comment>
<comment type="similarity">
    <text evidence="1">Belongs to the bacterial histone-like protein family.</text>
</comment>
<organism>
    <name type="scientific">Xanthomonas oryzae pv. oryzae (strain KACC10331 / KXO85)</name>
    <dbReference type="NCBI Taxonomy" id="291331"/>
    <lineage>
        <taxon>Bacteria</taxon>
        <taxon>Pseudomonadati</taxon>
        <taxon>Pseudomonadota</taxon>
        <taxon>Gammaproteobacteria</taxon>
        <taxon>Lysobacterales</taxon>
        <taxon>Lysobacteraceae</taxon>
        <taxon>Xanthomonas</taxon>
    </lineage>
</organism>
<name>IHFA_XANOR</name>
<sequence>MALTKAEMAERLFDEVGLNKREAKEFVDAFFDVLRDALEQGRQVKLSGFGNFDLRRKNQRPGRNPKTGEEIPISARTVVTFRPGQKLKERVEAYAGSGQ</sequence>
<dbReference type="EMBL" id="AE013598">
    <property type="protein sequence ID" value="AAW76435.1"/>
    <property type="molecule type" value="Genomic_DNA"/>
</dbReference>
<dbReference type="SMR" id="Q5GXY6"/>
<dbReference type="STRING" id="291331.XOO3181"/>
<dbReference type="KEGG" id="xoo:XOO3181"/>
<dbReference type="HOGENOM" id="CLU_105066_1_3_6"/>
<dbReference type="Proteomes" id="UP000006735">
    <property type="component" value="Chromosome"/>
</dbReference>
<dbReference type="GO" id="GO:0005829">
    <property type="term" value="C:cytosol"/>
    <property type="evidence" value="ECO:0007669"/>
    <property type="project" value="TreeGrafter"/>
</dbReference>
<dbReference type="GO" id="GO:0003677">
    <property type="term" value="F:DNA binding"/>
    <property type="evidence" value="ECO:0007669"/>
    <property type="project" value="UniProtKB-UniRule"/>
</dbReference>
<dbReference type="GO" id="GO:0030527">
    <property type="term" value="F:structural constituent of chromatin"/>
    <property type="evidence" value="ECO:0007669"/>
    <property type="project" value="InterPro"/>
</dbReference>
<dbReference type="GO" id="GO:0006310">
    <property type="term" value="P:DNA recombination"/>
    <property type="evidence" value="ECO:0007669"/>
    <property type="project" value="UniProtKB-UniRule"/>
</dbReference>
<dbReference type="GO" id="GO:0009893">
    <property type="term" value="P:positive regulation of metabolic process"/>
    <property type="evidence" value="ECO:0007669"/>
    <property type="project" value="UniProtKB-ARBA"/>
</dbReference>
<dbReference type="GO" id="GO:0006355">
    <property type="term" value="P:regulation of DNA-templated transcription"/>
    <property type="evidence" value="ECO:0007669"/>
    <property type="project" value="UniProtKB-UniRule"/>
</dbReference>
<dbReference type="GO" id="GO:0006417">
    <property type="term" value="P:regulation of translation"/>
    <property type="evidence" value="ECO:0007669"/>
    <property type="project" value="UniProtKB-UniRule"/>
</dbReference>
<dbReference type="CDD" id="cd13835">
    <property type="entry name" value="IHF_A"/>
    <property type="match status" value="1"/>
</dbReference>
<dbReference type="FunFam" id="4.10.520.10:FF:000002">
    <property type="entry name" value="Integration host factor subunit alpha"/>
    <property type="match status" value="1"/>
</dbReference>
<dbReference type="Gene3D" id="4.10.520.10">
    <property type="entry name" value="IHF-like DNA-binding proteins"/>
    <property type="match status" value="1"/>
</dbReference>
<dbReference type="HAMAP" id="MF_00380">
    <property type="entry name" value="IHF_alpha"/>
    <property type="match status" value="1"/>
</dbReference>
<dbReference type="InterPro" id="IPR000119">
    <property type="entry name" value="Hist_DNA-bd"/>
</dbReference>
<dbReference type="InterPro" id="IPR020816">
    <property type="entry name" value="Histone-like_DNA-bd_CS"/>
</dbReference>
<dbReference type="InterPro" id="IPR010992">
    <property type="entry name" value="IHF-like_DNA-bd_dom_sf"/>
</dbReference>
<dbReference type="InterPro" id="IPR005684">
    <property type="entry name" value="IHF_alpha"/>
</dbReference>
<dbReference type="NCBIfam" id="TIGR00987">
    <property type="entry name" value="himA"/>
    <property type="match status" value="1"/>
</dbReference>
<dbReference type="NCBIfam" id="NF001401">
    <property type="entry name" value="PRK00285.1"/>
    <property type="match status" value="1"/>
</dbReference>
<dbReference type="PANTHER" id="PTHR33175">
    <property type="entry name" value="DNA-BINDING PROTEIN HU"/>
    <property type="match status" value="1"/>
</dbReference>
<dbReference type="PANTHER" id="PTHR33175:SF2">
    <property type="entry name" value="INTEGRATION HOST FACTOR SUBUNIT ALPHA"/>
    <property type="match status" value="1"/>
</dbReference>
<dbReference type="Pfam" id="PF00216">
    <property type="entry name" value="Bac_DNA_binding"/>
    <property type="match status" value="1"/>
</dbReference>
<dbReference type="PRINTS" id="PR01727">
    <property type="entry name" value="DNABINDINGHU"/>
</dbReference>
<dbReference type="SMART" id="SM00411">
    <property type="entry name" value="BHL"/>
    <property type="match status" value="1"/>
</dbReference>
<dbReference type="SUPFAM" id="SSF47729">
    <property type="entry name" value="IHF-like DNA-binding proteins"/>
    <property type="match status" value="1"/>
</dbReference>
<dbReference type="PROSITE" id="PS00045">
    <property type="entry name" value="HISTONE_LIKE"/>
    <property type="match status" value="1"/>
</dbReference>
<protein>
    <recommendedName>
        <fullName evidence="1">Integration host factor subunit alpha</fullName>
        <shortName evidence="1">IHF-alpha</shortName>
    </recommendedName>
</protein>
<reference key="1">
    <citation type="journal article" date="2005" name="Nucleic Acids Res.">
        <title>The genome sequence of Xanthomonas oryzae pathovar oryzae KACC10331, the bacterial blight pathogen of rice.</title>
        <authorList>
            <person name="Lee B.-M."/>
            <person name="Park Y.-J."/>
            <person name="Park D.-S."/>
            <person name="Kang H.-W."/>
            <person name="Kim J.-G."/>
            <person name="Song E.-S."/>
            <person name="Park I.-C."/>
            <person name="Yoon U.-H."/>
            <person name="Hahn J.-H."/>
            <person name="Koo B.-S."/>
            <person name="Lee G.-B."/>
            <person name="Kim H."/>
            <person name="Park H.-S."/>
            <person name="Yoon K.-O."/>
            <person name="Kim J.-H."/>
            <person name="Jung C.-H."/>
            <person name="Koh N.-H."/>
            <person name="Seo J.-S."/>
            <person name="Go S.-J."/>
        </authorList>
    </citation>
    <scope>NUCLEOTIDE SEQUENCE [LARGE SCALE GENOMIC DNA]</scope>
    <source>
        <strain>KACC10331 / KXO85</strain>
    </source>
</reference>
<feature type="chain" id="PRO_0000277790" description="Integration host factor subunit alpha">
    <location>
        <begin position="1"/>
        <end position="99"/>
    </location>
</feature>